<feature type="chain" id="PRO_1000096119" description="Elongation factor P">
    <location>
        <begin position="1"/>
        <end position="190"/>
    </location>
</feature>
<keyword id="KW-0963">Cytoplasm</keyword>
<keyword id="KW-0251">Elongation factor</keyword>
<keyword id="KW-0648">Protein biosynthesis</keyword>
<keyword id="KW-1185">Reference proteome</keyword>
<proteinExistence type="inferred from homology"/>
<name>EFP_AMOA5</name>
<sequence length="190" mass="21435">MATTSDFRNGLCIEFNNDLYTIVEFQHVKPGKGGAFVRTKLKSLTNGKVIDNTFNSGVKITTARIERKTYQFLYKDGAGYHLMDNNTFEQLDLDEKAIQNPLLIKEGQELDVLFHQETGNFIGCELPPFVELKVTYTEPGLKGDTATRALKPATLETGLQIQVPLFIDNDEIIKIDTRTIAYVERVKTDI</sequence>
<evidence type="ECO:0000255" key="1">
    <source>
        <dbReference type="HAMAP-Rule" id="MF_00141"/>
    </source>
</evidence>
<accession>B3ES99</accession>
<dbReference type="EMBL" id="CP001102">
    <property type="protein sequence ID" value="ACE06101.1"/>
    <property type="molecule type" value="Genomic_DNA"/>
</dbReference>
<dbReference type="RefSeq" id="WP_012472870.1">
    <property type="nucleotide sequence ID" value="NC_010830.1"/>
</dbReference>
<dbReference type="SMR" id="B3ES99"/>
<dbReference type="STRING" id="452471.Aasi_0714"/>
<dbReference type="KEGG" id="aas:Aasi_0714"/>
<dbReference type="eggNOG" id="COG0231">
    <property type="taxonomic scope" value="Bacteria"/>
</dbReference>
<dbReference type="HOGENOM" id="CLU_074944_0_1_10"/>
<dbReference type="OrthoDB" id="9801844at2"/>
<dbReference type="UniPathway" id="UPA00345"/>
<dbReference type="Proteomes" id="UP000001227">
    <property type="component" value="Chromosome"/>
</dbReference>
<dbReference type="GO" id="GO:0005737">
    <property type="term" value="C:cytoplasm"/>
    <property type="evidence" value="ECO:0007669"/>
    <property type="project" value="UniProtKB-SubCell"/>
</dbReference>
<dbReference type="GO" id="GO:0003746">
    <property type="term" value="F:translation elongation factor activity"/>
    <property type="evidence" value="ECO:0007669"/>
    <property type="project" value="UniProtKB-UniRule"/>
</dbReference>
<dbReference type="GO" id="GO:0043043">
    <property type="term" value="P:peptide biosynthetic process"/>
    <property type="evidence" value="ECO:0007669"/>
    <property type="project" value="InterPro"/>
</dbReference>
<dbReference type="CDD" id="cd04470">
    <property type="entry name" value="S1_EF-P_repeat_1"/>
    <property type="match status" value="1"/>
</dbReference>
<dbReference type="CDD" id="cd05794">
    <property type="entry name" value="S1_EF-P_repeat_2"/>
    <property type="match status" value="1"/>
</dbReference>
<dbReference type="FunFam" id="2.30.30.30:FF:000003">
    <property type="entry name" value="Elongation factor P"/>
    <property type="match status" value="1"/>
</dbReference>
<dbReference type="FunFam" id="2.40.50.140:FF:000004">
    <property type="entry name" value="Elongation factor P"/>
    <property type="match status" value="1"/>
</dbReference>
<dbReference type="Gene3D" id="2.30.30.30">
    <property type="match status" value="1"/>
</dbReference>
<dbReference type="Gene3D" id="2.40.50.140">
    <property type="entry name" value="Nucleic acid-binding proteins"/>
    <property type="match status" value="2"/>
</dbReference>
<dbReference type="HAMAP" id="MF_00141">
    <property type="entry name" value="EF_P"/>
    <property type="match status" value="1"/>
</dbReference>
<dbReference type="InterPro" id="IPR015365">
    <property type="entry name" value="Elong-fact-P_C"/>
</dbReference>
<dbReference type="InterPro" id="IPR012340">
    <property type="entry name" value="NA-bd_OB-fold"/>
</dbReference>
<dbReference type="InterPro" id="IPR014722">
    <property type="entry name" value="Rib_uL2_dom2"/>
</dbReference>
<dbReference type="InterPro" id="IPR020599">
    <property type="entry name" value="Transl_elong_fac_P/YeiP"/>
</dbReference>
<dbReference type="InterPro" id="IPR013185">
    <property type="entry name" value="Transl_elong_KOW-like"/>
</dbReference>
<dbReference type="InterPro" id="IPR001059">
    <property type="entry name" value="Transl_elong_P/YeiP_cen"/>
</dbReference>
<dbReference type="InterPro" id="IPR013852">
    <property type="entry name" value="Transl_elong_P/YeiP_CS"/>
</dbReference>
<dbReference type="InterPro" id="IPR011768">
    <property type="entry name" value="Transl_elongation_fac_P"/>
</dbReference>
<dbReference type="InterPro" id="IPR008991">
    <property type="entry name" value="Translation_prot_SH3-like_sf"/>
</dbReference>
<dbReference type="NCBIfam" id="TIGR00038">
    <property type="entry name" value="efp"/>
    <property type="match status" value="1"/>
</dbReference>
<dbReference type="NCBIfam" id="NF001810">
    <property type="entry name" value="PRK00529.1"/>
    <property type="match status" value="1"/>
</dbReference>
<dbReference type="PANTHER" id="PTHR30053">
    <property type="entry name" value="ELONGATION FACTOR P"/>
    <property type="match status" value="1"/>
</dbReference>
<dbReference type="PANTHER" id="PTHR30053:SF12">
    <property type="entry name" value="ELONGATION FACTOR P (EF-P) FAMILY PROTEIN"/>
    <property type="match status" value="1"/>
</dbReference>
<dbReference type="Pfam" id="PF01132">
    <property type="entry name" value="EFP"/>
    <property type="match status" value="1"/>
</dbReference>
<dbReference type="Pfam" id="PF08207">
    <property type="entry name" value="EFP_N"/>
    <property type="match status" value="1"/>
</dbReference>
<dbReference type="Pfam" id="PF09285">
    <property type="entry name" value="Elong-fact-P_C"/>
    <property type="match status" value="1"/>
</dbReference>
<dbReference type="PIRSF" id="PIRSF005901">
    <property type="entry name" value="EF-P"/>
    <property type="match status" value="1"/>
</dbReference>
<dbReference type="SMART" id="SM01185">
    <property type="entry name" value="EFP"/>
    <property type="match status" value="1"/>
</dbReference>
<dbReference type="SMART" id="SM00841">
    <property type="entry name" value="Elong-fact-P_C"/>
    <property type="match status" value="1"/>
</dbReference>
<dbReference type="SUPFAM" id="SSF50249">
    <property type="entry name" value="Nucleic acid-binding proteins"/>
    <property type="match status" value="2"/>
</dbReference>
<dbReference type="SUPFAM" id="SSF50104">
    <property type="entry name" value="Translation proteins SH3-like domain"/>
    <property type="match status" value="1"/>
</dbReference>
<dbReference type="PROSITE" id="PS01275">
    <property type="entry name" value="EFP"/>
    <property type="match status" value="1"/>
</dbReference>
<reference key="1">
    <citation type="journal article" date="2010" name="J. Bacteriol.">
        <title>The genome of the amoeba symbiont 'Candidatus Amoebophilus asiaticus' reveals common mechanisms for host cell interaction among amoeba-associated bacteria.</title>
        <authorList>
            <person name="Schmitz-Esser S."/>
            <person name="Tischler P."/>
            <person name="Arnold R."/>
            <person name="Montanaro J."/>
            <person name="Wagner M."/>
            <person name="Rattei T."/>
            <person name="Horn M."/>
        </authorList>
    </citation>
    <scope>NUCLEOTIDE SEQUENCE [LARGE SCALE GENOMIC DNA]</scope>
    <source>
        <strain>5a2</strain>
    </source>
</reference>
<organism>
    <name type="scientific">Amoebophilus asiaticus (strain 5a2)</name>
    <dbReference type="NCBI Taxonomy" id="452471"/>
    <lineage>
        <taxon>Bacteria</taxon>
        <taxon>Pseudomonadati</taxon>
        <taxon>Bacteroidota</taxon>
        <taxon>Cytophagia</taxon>
        <taxon>Cytophagales</taxon>
        <taxon>Amoebophilaceae</taxon>
        <taxon>Candidatus Amoebophilus</taxon>
    </lineage>
</organism>
<comment type="function">
    <text evidence="1">Involved in peptide bond synthesis. Stimulates efficient translation and peptide-bond synthesis on native or reconstituted 70S ribosomes in vitro. Probably functions indirectly by altering the affinity of the ribosome for aminoacyl-tRNA, thus increasing their reactivity as acceptors for peptidyl transferase.</text>
</comment>
<comment type="pathway">
    <text evidence="1">Protein biosynthesis; polypeptide chain elongation.</text>
</comment>
<comment type="subcellular location">
    <subcellularLocation>
        <location evidence="1">Cytoplasm</location>
    </subcellularLocation>
</comment>
<comment type="similarity">
    <text evidence="1">Belongs to the elongation factor P family.</text>
</comment>
<protein>
    <recommendedName>
        <fullName evidence="1">Elongation factor P</fullName>
        <shortName evidence="1">EF-P</shortName>
    </recommendedName>
</protein>
<gene>
    <name evidence="1" type="primary">efp</name>
    <name type="ordered locus">Aasi_0714</name>
</gene>